<proteinExistence type="inferred from homology"/>
<sequence>MATLFIADLHLCVEEPAITAGFLRFLAGEARKADALYILGDLFEAWIGDDDPNPLHRKMAAAIKAVSDSGVPCYFIHGNRDFLLGKRFARESGMTLLPEEKVLELYGRRVLIMHGDTLCTDDAGYQAFRAKVHKPWLQTLFLALPLFVRKRIAARMRANSKEANSSKSLAIMDVNQNAVVSAMEKHQVQWLIHGHTHRPAVHELIANQQPAFRVVLGAWHTEGSMVKVTADDVELIHFPF</sequence>
<dbReference type="EC" id="3.6.1.54" evidence="1"/>
<dbReference type="EMBL" id="CP001396">
    <property type="protein sequence ID" value="ACR65732.1"/>
    <property type="molecule type" value="Genomic_DNA"/>
</dbReference>
<dbReference type="RefSeq" id="WP_000212247.1">
    <property type="nucleotide sequence ID" value="NC_012759.1"/>
</dbReference>
<dbReference type="SMR" id="C4ZUX2"/>
<dbReference type="KEGG" id="ebw:BWG_0399"/>
<dbReference type="HOGENOM" id="CLU_074586_0_0_6"/>
<dbReference type="UniPathway" id="UPA00359">
    <property type="reaction ID" value="UER00480"/>
</dbReference>
<dbReference type="GO" id="GO:0005737">
    <property type="term" value="C:cytoplasm"/>
    <property type="evidence" value="ECO:0007669"/>
    <property type="project" value="InterPro"/>
</dbReference>
<dbReference type="GO" id="GO:0019897">
    <property type="term" value="C:extrinsic component of plasma membrane"/>
    <property type="evidence" value="ECO:0007669"/>
    <property type="project" value="UniProtKB-UniRule"/>
</dbReference>
<dbReference type="GO" id="GO:0030145">
    <property type="term" value="F:manganese ion binding"/>
    <property type="evidence" value="ECO:0007669"/>
    <property type="project" value="UniProtKB-UniRule"/>
</dbReference>
<dbReference type="GO" id="GO:0008758">
    <property type="term" value="F:UDP-2,3-diacylglucosamine hydrolase activity"/>
    <property type="evidence" value="ECO:0007669"/>
    <property type="project" value="UniProtKB-UniRule"/>
</dbReference>
<dbReference type="GO" id="GO:0009245">
    <property type="term" value="P:lipid A biosynthetic process"/>
    <property type="evidence" value="ECO:0007669"/>
    <property type="project" value="UniProtKB-UniRule"/>
</dbReference>
<dbReference type="CDD" id="cd07398">
    <property type="entry name" value="MPP_YbbF-LpxH"/>
    <property type="match status" value="1"/>
</dbReference>
<dbReference type="FunFam" id="3.60.21.10:FF:000012">
    <property type="entry name" value="UDP-2,3-diacylglucosamine hydrolase"/>
    <property type="match status" value="1"/>
</dbReference>
<dbReference type="Gene3D" id="3.60.21.10">
    <property type="match status" value="1"/>
</dbReference>
<dbReference type="HAMAP" id="MF_00575">
    <property type="entry name" value="LpxH"/>
    <property type="match status" value="1"/>
</dbReference>
<dbReference type="InterPro" id="IPR004843">
    <property type="entry name" value="Calcineurin-like_PHP_ApaH"/>
</dbReference>
<dbReference type="InterPro" id="IPR043461">
    <property type="entry name" value="LpxH-like"/>
</dbReference>
<dbReference type="InterPro" id="IPR029052">
    <property type="entry name" value="Metallo-depent_PP-like"/>
</dbReference>
<dbReference type="InterPro" id="IPR010138">
    <property type="entry name" value="UDP-diacylglucosamine_Hdrlase"/>
</dbReference>
<dbReference type="NCBIfam" id="TIGR01854">
    <property type="entry name" value="lipid_A_lpxH"/>
    <property type="match status" value="1"/>
</dbReference>
<dbReference type="NCBIfam" id="NF003743">
    <property type="entry name" value="PRK05340.1"/>
    <property type="match status" value="1"/>
</dbReference>
<dbReference type="PANTHER" id="PTHR34990:SF1">
    <property type="entry name" value="UDP-2,3-DIACYLGLUCOSAMINE HYDROLASE"/>
    <property type="match status" value="1"/>
</dbReference>
<dbReference type="PANTHER" id="PTHR34990">
    <property type="entry name" value="UDP-2,3-DIACYLGLUCOSAMINE HYDROLASE-RELATED"/>
    <property type="match status" value="1"/>
</dbReference>
<dbReference type="Pfam" id="PF00149">
    <property type="entry name" value="Metallophos"/>
    <property type="match status" value="1"/>
</dbReference>
<dbReference type="SUPFAM" id="SSF56300">
    <property type="entry name" value="Metallo-dependent phosphatases"/>
    <property type="match status" value="1"/>
</dbReference>
<feature type="chain" id="PRO_1000212092" description="UDP-2,3-diacylglucosamine hydrolase">
    <location>
        <begin position="1"/>
        <end position="240"/>
    </location>
</feature>
<feature type="binding site" evidence="1">
    <location>
        <position position="8"/>
    </location>
    <ligand>
        <name>Mn(2+)</name>
        <dbReference type="ChEBI" id="CHEBI:29035"/>
        <label>1</label>
    </ligand>
</feature>
<feature type="binding site" evidence="1">
    <location>
        <position position="10"/>
    </location>
    <ligand>
        <name>Mn(2+)</name>
        <dbReference type="ChEBI" id="CHEBI:29035"/>
        <label>1</label>
    </ligand>
</feature>
<feature type="binding site" evidence="1">
    <location>
        <position position="41"/>
    </location>
    <ligand>
        <name>Mn(2+)</name>
        <dbReference type="ChEBI" id="CHEBI:29035"/>
        <label>1</label>
    </ligand>
</feature>
<feature type="binding site" evidence="1">
    <location>
        <position position="41"/>
    </location>
    <ligand>
        <name>Mn(2+)</name>
        <dbReference type="ChEBI" id="CHEBI:29035"/>
        <label>2</label>
    </ligand>
</feature>
<feature type="binding site" evidence="1">
    <location>
        <begin position="79"/>
        <end position="80"/>
    </location>
    <ligand>
        <name>substrate</name>
    </ligand>
</feature>
<feature type="binding site" evidence="1">
    <location>
        <position position="79"/>
    </location>
    <ligand>
        <name>Mn(2+)</name>
        <dbReference type="ChEBI" id="CHEBI:29035"/>
        <label>2</label>
    </ligand>
</feature>
<feature type="binding site" evidence="1">
    <location>
        <position position="114"/>
    </location>
    <ligand>
        <name>Mn(2+)</name>
        <dbReference type="ChEBI" id="CHEBI:29035"/>
        <label>2</label>
    </ligand>
</feature>
<feature type="binding site" evidence="1">
    <location>
        <position position="122"/>
    </location>
    <ligand>
        <name>substrate</name>
    </ligand>
</feature>
<feature type="binding site" evidence="1">
    <location>
        <position position="160"/>
    </location>
    <ligand>
        <name>substrate</name>
    </ligand>
</feature>
<feature type="binding site" evidence="1">
    <location>
        <position position="164"/>
    </location>
    <ligand>
        <name>substrate</name>
    </ligand>
</feature>
<feature type="binding site" evidence="1">
    <location>
        <position position="167"/>
    </location>
    <ligand>
        <name>substrate</name>
    </ligand>
</feature>
<feature type="binding site" evidence="1">
    <location>
        <position position="195"/>
    </location>
    <ligand>
        <name>Mn(2+)</name>
        <dbReference type="ChEBI" id="CHEBI:29035"/>
        <label>2</label>
    </ligand>
</feature>
<feature type="binding site" evidence="1">
    <location>
        <position position="195"/>
    </location>
    <ligand>
        <name>substrate</name>
    </ligand>
</feature>
<feature type="binding site" evidence="1">
    <location>
        <position position="197"/>
    </location>
    <ligand>
        <name>Mn(2+)</name>
        <dbReference type="ChEBI" id="CHEBI:29035"/>
        <label>1</label>
    </ligand>
</feature>
<gene>
    <name evidence="1" type="primary">lpxH</name>
    <name type="ordered locus">BWG_0399</name>
</gene>
<evidence type="ECO:0000255" key="1">
    <source>
        <dbReference type="HAMAP-Rule" id="MF_00575"/>
    </source>
</evidence>
<protein>
    <recommendedName>
        <fullName evidence="1">UDP-2,3-diacylglucosamine hydrolase</fullName>
        <ecNumber evidence="1">3.6.1.54</ecNumber>
    </recommendedName>
    <alternativeName>
        <fullName evidence="1">UDP-2,3-diacylglucosamine diphosphatase</fullName>
    </alternativeName>
</protein>
<name>LPXH_ECOBW</name>
<organism>
    <name type="scientific">Escherichia coli (strain K12 / MC4100 / BW2952)</name>
    <dbReference type="NCBI Taxonomy" id="595496"/>
    <lineage>
        <taxon>Bacteria</taxon>
        <taxon>Pseudomonadati</taxon>
        <taxon>Pseudomonadota</taxon>
        <taxon>Gammaproteobacteria</taxon>
        <taxon>Enterobacterales</taxon>
        <taxon>Enterobacteriaceae</taxon>
        <taxon>Escherichia</taxon>
    </lineage>
</organism>
<comment type="function">
    <text evidence="1">Hydrolyzes the pyrophosphate bond of UDP-2,3-diacylglucosamine to yield 2,3-diacylglucosamine 1-phosphate (lipid X) and UMP by catalyzing the attack of water at the alpha-P atom. Involved in the biosynthesis of lipid A, a phosphorylated glycolipid that anchors the lipopolysaccharide to the outer membrane of the cell.</text>
</comment>
<comment type="catalytic activity">
    <reaction evidence="1">
        <text>UDP-2-N,3-O-bis[(3R)-3-hydroxytetradecanoyl]-alpha-D-glucosamine + H2O = 2-N,3-O-bis[(3R)-3-hydroxytetradecanoyl]-alpha-D-glucosaminyl 1-phosphate + UMP + 2 H(+)</text>
        <dbReference type="Rhea" id="RHEA:25213"/>
        <dbReference type="ChEBI" id="CHEBI:15377"/>
        <dbReference type="ChEBI" id="CHEBI:15378"/>
        <dbReference type="ChEBI" id="CHEBI:57865"/>
        <dbReference type="ChEBI" id="CHEBI:57957"/>
        <dbReference type="ChEBI" id="CHEBI:78847"/>
        <dbReference type="EC" id="3.6.1.54"/>
    </reaction>
</comment>
<comment type="cofactor">
    <cofactor evidence="1">
        <name>Mn(2+)</name>
        <dbReference type="ChEBI" id="CHEBI:29035"/>
    </cofactor>
    <text evidence="1">Binds 2 Mn(2+) ions per subunit in a binuclear metal center.</text>
</comment>
<comment type="pathway">
    <text evidence="1">Glycolipid biosynthesis; lipid IV(A) biosynthesis; lipid IV(A) from (3R)-3-hydroxytetradecanoyl-[acyl-carrier-protein] and UDP-N-acetyl-alpha-D-glucosamine: step 4/6.</text>
</comment>
<comment type="subcellular location">
    <subcellularLocation>
        <location evidence="1">Cell inner membrane</location>
        <topology evidence="1">Peripheral membrane protein</topology>
        <orientation evidence="1">Cytoplasmic side</orientation>
    </subcellularLocation>
</comment>
<comment type="similarity">
    <text evidence="1">Belongs to the LpxH family.</text>
</comment>
<keyword id="KW-0997">Cell inner membrane</keyword>
<keyword id="KW-1003">Cell membrane</keyword>
<keyword id="KW-0378">Hydrolase</keyword>
<keyword id="KW-0441">Lipid A biosynthesis</keyword>
<keyword id="KW-0444">Lipid biosynthesis</keyword>
<keyword id="KW-0443">Lipid metabolism</keyword>
<keyword id="KW-0464">Manganese</keyword>
<keyword id="KW-0472">Membrane</keyword>
<keyword id="KW-0479">Metal-binding</keyword>
<accession>C4ZUX2</accession>
<reference key="1">
    <citation type="journal article" date="2009" name="J. Bacteriol.">
        <title>Genomic sequencing reveals regulatory mutations and recombinational events in the widely used MC4100 lineage of Escherichia coli K-12.</title>
        <authorList>
            <person name="Ferenci T."/>
            <person name="Zhou Z."/>
            <person name="Betteridge T."/>
            <person name="Ren Y."/>
            <person name="Liu Y."/>
            <person name="Feng L."/>
            <person name="Reeves P.R."/>
            <person name="Wang L."/>
        </authorList>
    </citation>
    <scope>NUCLEOTIDE SEQUENCE [LARGE SCALE GENOMIC DNA]</scope>
    <source>
        <strain>K12 / MC4100 / BW2952</strain>
    </source>
</reference>